<accession>C1AUB5</accession>
<name>AMPA_RHOOB</name>
<gene>
    <name evidence="1" type="primary">pepA</name>
    <name type="ordered locus">ROP_08760</name>
</gene>
<organism>
    <name type="scientific">Rhodococcus opacus (strain B4)</name>
    <dbReference type="NCBI Taxonomy" id="632772"/>
    <lineage>
        <taxon>Bacteria</taxon>
        <taxon>Bacillati</taxon>
        <taxon>Actinomycetota</taxon>
        <taxon>Actinomycetes</taxon>
        <taxon>Mycobacteriales</taxon>
        <taxon>Nocardiaceae</taxon>
        <taxon>Rhodococcus</taxon>
    </lineage>
</organism>
<feature type="chain" id="PRO_1000192722" description="Probable cytosol aminopeptidase">
    <location>
        <begin position="1"/>
        <end position="505"/>
    </location>
</feature>
<feature type="active site" evidence="1">
    <location>
        <position position="281"/>
    </location>
</feature>
<feature type="active site" evidence="1">
    <location>
        <position position="355"/>
    </location>
</feature>
<feature type="binding site" evidence="1">
    <location>
        <position position="269"/>
    </location>
    <ligand>
        <name>Mn(2+)</name>
        <dbReference type="ChEBI" id="CHEBI:29035"/>
        <label>2</label>
    </ligand>
</feature>
<feature type="binding site" evidence="1">
    <location>
        <position position="274"/>
    </location>
    <ligand>
        <name>Mn(2+)</name>
        <dbReference type="ChEBI" id="CHEBI:29035"/>
        <label>1</label>
    </ligand>
</feature>
<feature type="binding site" evidence="1">
    <location>
        <position position="274"/>
    </location>
    <ligand>
        <name>Mn(2+)</name>
        <dbReference type="ChEBI" id="CHEBI:29035"/>
        <label>2</label>
    </ligand>
</feature>
<feature type="binding site" evidence="1">
    <location>
        <position position="292"/>
    </location>
    <ligand>
        <name>Mn(2+)</name>
        <dbReference type="ChEBI" id="CHEBI:29035"/>
        <label>2</label>
    </ligand>
</feature>
<feature type="binding site" evidence="1">
    <location>
        <position position="351"/>
    </location>
    <ligand>
        <name>Mn(2+)</name>
        <dbReference type="ChEBI" id="CHEBI:29035"/>
        <label>1</label>
    </ligand>
</feature>
<feature type="binding site" evidence="1">
    <location>
        <position position="353"/>
    </location>
    <ligand>
        <name>Mn(2+)</name>
        <dbReference type="ChEBI" id="CHEBI:29035"/>
        <label>1</label>
    </ligand>
</feature>
<feature type="binding site" evidence="1">
    <location>
        <position position="353"/>
    </location>
    <ligand>
        <name>Mn(2+)</name>
        <dbReference type="ChEBI" id="CHEBI:29035"/>
        <label>2</label>
    </ligand>
</feature>
<protein>
    <recommendedName>
        <fullName evidence="1">Probable cytosol aminopeptidase</fullName>
        <ecNumber evidence="1">3.4.11.1</ecNumber>
    </recommendedName>
    <alternativeName>
        <fullName evidence="1">Leucine aminopeptidase</fullName>
        <shortName evidence="1">LAP</shortName>
        <ecNumber evidence="1">3.4.11.10</ecNumber>
    </alternativeName>
    <alternativeName>
        <fullName evidence="1">Leucyl aminopeptidase</fullName>
    </alternativeName>
</protein>
<sequence length="505" mass="51824">MSTRTARPLGPQLALAGTVGKRVDVLVIGLTSSSDGPEIALGDGIVDEAVLTGLLDTLVAVGASGKAEETTRIPAPDTLPVDSVLAVGLGSAEKLDAEQIRKSAGAAARTLSGVGTAATTLSVLDLGAAAEGFALGAYRFTEFKSAKSAPGPDAQPVARVELLVSSPRAKESKDTLARSAAIAEAVATAREFVNTPPSHLFPAEFADRAKELGTDSGLKVEVLDEKALEKNGYGGILGVGKGSSRLPRLVRLSYSAKKRNAPKVALVGKGITFDTGGISIKPAAGMENMTSDMGGAAAVVATVVLAAKLGLPVDVTATVPMAENMPSSTAQRPGDVLTQYGGTTVEVINTDAEGRLVLADAIVRACEDDPDYLIDTATLTGAQMVALGNRTPGVMGTDAFRDRVAAISQEIGENAWAMPMPAELRSDLDSKIADLANVTNHRWGGMLAAALYLKEFVADGVQWAHIDVAGPAYNSSGPWGYTGRGGTGVPVRTMISVIEDIAAHG</sequence>
<dbReference type="EC" id="3.4.11.1" evidence="1"/>
<dbReference type="EC" id="3.4.11.10" evidence="1"/>
<dbReference type="EMBL" id="AP011115">
    <property type="protein sequence ID" value="BAH49123.1"/>
    <property type="molecule type" value="Genomic_DNA"/>
</dbReference>
<dbReference type="RefSeq" id="WP_012688116.1">
    <property type="nucleotide sequence ID" value="NC_012522.1"/>
</dbReference>
<dbReference type="SMR" id="C1AUB5"/>
<dbReference type="STRING" id="632772.ROP_08760"/>
<dbReference type="KEGG" id="rop:ROP_08760"/>
<dbReference type="PATRIC" id="fig|632772.20.peg.940"/>
<dbReference type="HOGENOM" id="CLU_013734_2_0_11"/>
<dbReference type="OrthoDB" id="9809354at2"/>
<dbReference type="Proteomes" id="UP000002212">
    <property type="component" value="Chromosome"/>
</dbReference>
<dbReference type="GO" id="GO:0005737">
    <property type="term" value="C:cytoplasm"/>
    <property type="evidence" value="ECO:0007669"/>
    <property type="project" value="UniProtKB-SubCell"/>
</dbReference>
<dbReference type="GO" id="GO:0030145">
    <property type="term" value="F:manganese ion binding"/>
    <property type="evidence" value="ECO:0007669"/>
    <property type="project" value="UniProtKB-UniRule"/>
</dbReference>
<dbReference type="GO" id="GO:0070006">
    <property type="term" value="F:metalloaminopeptidase activity"/>
    <property type="evidence" value="ECO:0007669"/>
    <property type="project" value="InterPro"/>
</dbReference>
<dbReference type="GO" id="GO:0006508">
    <property type="term" value="P:proteolysis"/>
    <property type="evidence" value="ECO:0007669"/>
    <property type="project" value="UniProtKB-KW"/>
</dbReference>
<dbReference type="CDD" id="cd00433">
    <property type="entry name" value="Peptidase_M17"/>
    <property type="match status" value="1"/>
</dbReference>
<dbReference type="Gene3D" id="3.40.220.10">
    <property type="entry name" value="Leucine Aminopeptidase, subunit E, domain 1"/>
    <property type="match status" value="1"/>
</dbReference>
<dbReference type="Gene3D" id="3.40.630.10">
    <property type="entry name" value="Zn peptidases"/>
    <property type="match status" value="1"/>
</dbReference>
<dbReference type="HAMAP" id="MF_00181">
    <property type="entry name" value="Cytosol_peptidase_M17"/>
    <property type="match status" value="1"/>
</dbReference>
<dbReference type="InterPro" id="IPR011356">
    <property type="entry name" value="Leucine_aapep/pepB"/>
</dbReference>
<dbReference type="InterPro" id="IPR043472">
    <property type="entry name" value="Macro_dom-like"/>
</dbReference>
<dbReference type="InterPro" id="IPR000819">
    <property type="entry name" value="Peptidase_M17_C"/>
</dbReference>
<dbReference type="InterPro" id="IPR023042">
    <property type="entry name" value="Peptidase_M17_leu_NH2_pept"/>
</dbReference>
<dbReference type="InterPro" id="IPR008283">
    <property type="entry name" value="Peptidase_M17_N"/>
</dbReference>
<dbReference type="NCBIfam" id="NF002073">
    <property type="entry name" value="PRK00913.1-2"/>
    <property type="match status" value="1"/>
</dbReference>
<dbReference type="PANTHER" id="PTHR11963:SF23">
    <property type="entry name" value="CYTOSOL AMINOPEPTIDASE"/>
    <property type="match status" value="1"/>
</dbReference>
<dbReference type="PANTHER" id="PTHR11963">
    <property type="entry name" value="LEUCINE AMINOPEPTIDASE-RELATED"/>
    <property type="match status" value="1"/>
</dbReference>
<dbReference type="Pfam" id="PF00883">
    <property type="entry name" value="Peptidase_M17"/>
    <property type="match status" value="1"/>
</dbReference>
<dbReference type="Pfam" id="PF02789">
    <property type="entry name" value="Peptidase_M17_N"/>
    <property type="match status" value="1"/>
</dbReference>
<dbReference type="PRINTS" id="PR00481">
    <property type="entry name" value="LAMNOPPTDASE"/>
</dbReference>
<dbReference type="SUPFAM" id="SSF52949">
    <property type="entry name" value="Macro domain-like"/>
    <property type="match status" value="1"/>
</dbReference>
<dbReference type="SUPFAM" id="SSF53187">
    <property type="entry name" value="Zn-dependent exopeptidases"/>
    <property type="match status" value="1"/>
</dbReference>
<dbReference type="PROSITE" id="PS00631">
    <property type="entry name" value="CYTOSOL_AP"/>
    <property type="match status" value="1"/>
</dbReference>
<proteinExistence type="inferred from homology"/>
<comment type="function">
    <text evidence="1">Presumably involved in the processing and regular turnover of intracellular proteins. Catalyzes the removal of unsubstituted N-terminal amino acids from various peptides.</text>
</comment>
<comment type="catalytic activity">
    <reaction evidence="1">
        <text>Release of an N-terminal amino acid, Xaa-|-Yaa-, in which Xaa is preferably Leu, but may be other amino acids including Pro although not Arg or Lys, and Yaa may be Pro. Amino acid amides and methyl esters are also readily hydrolyzed, but rates on arylamides are exceedingly low.</text>
        <dbReference type="EC" id="3.4.11.1"/>
    </reaction>
</comment>
<comment type="catalytic activity">
    <reaction evidence="1">
        <text>Release of an N-terminal amino acid, preferentially leucine, but not glutamic or aspartic acids.</text>
        <dbReference type="EC" id="3.4.11.10"/>
    </reaction>
</comment>
<comment type="cofactor">
    <cofactor evidence="1">
        <name>Mn(2+)</name>
        <dbReference type="ChEBI" id="CHEBI:29035"/>
    </cofactor>
    <text evidence="1">Binds 2 manganese ions per subunit.</text>
</comment>
<comment type="subcellular location">
    <subcellularLocation>
        <location evidence="1">Cytoplasm</location>
    </subcellularLocation>
</comment>
<comment type="similarity">
    <text evidence="1">Belongs to the peptidase M17 family.</text>
</comment>
<evidence type="ECO:0000255" key="1">
    <source>
        <dbReference type="HAMAP-Rule" id="MF_00181"/>
    </source>
</evidence>
<keyword id="KW-0031">Aminopeptidase</keyword>
<keyword id="KW-0963">Cytoplasm</keyword>
<keyword id="KW-0378">Hydrolase</keyword>
<keyword id="KW-0464">Manganese</keyword>
<keyword id="KW-0479">Metal-binding</keyword>
<keyword id="KW-0645">Protease</keyword>
<reference key="1">
    <citation type="submission" date="2009-03" db="EMBL/GenBank/DDBJ databases">
        <title>Comparison of the complete genome sequences of Rhodococcus erythropolis PR4 and Rhodococcus opacus B4.</title>
        <authorList>
            <person name="Takarada H."/>
            <person name="Sekine M."/>
            <person name="Hosoyama A."/>
            <person name="Yamada R."/>
            <person name="Fujisawa T."/>
            <person name="Omata S."/>
            <person name="Shimizu A."/>
            <person name="Tsukatani N."/>
            <person name="Tanikawa S."/>
            <person name="Fujita N."/>
            <person name="Harayama S."/>
        </authorList>
    </citation>
    <scope>NUCLEOTIDE SEQUENCE [LARGE SCALE GENOMIC DNA]</scope>
    <source>
        <strain>B4</strain>
    </source>
</reference>